<keyword id="KW-1185">Reference proteome</keyword>
<keyword id="KW-0687">Ribonucleoprotein</keyword>
<keyword id="KW-0689">Ribosomal protein</keyword>
<keyword id="KW-0694">RNA-binding</keyword>
<keyword id="KW-0699">rRNA-binding</keyword>
<keyword id="KW-0820">tRNA-binding</keyword>
<evidence type="ECO:0000255" key="1">
    <source>
        <dbReference type="HAMAP-Rule" id="MF_01342"/>
    </source>
</evidence>
<evidence type="ECO:0000305" key="2"/>
<sequence>MLSPKRTKFRKAHKGRIHGTAKGNTQLNFGQFGLKALEPERITARQIESARRAITRQMKRAGRVWIRIFPDLPVSTKPAEVRMGSGKGAPEYWVARVQPGRIMFEIDGVAEGIAREALKLGAAKLPIKTKIVTRIGEA</sequence>
<organism>
    <name type="scientific">Acidiphilium cryptum (strain JF-5)</name>
    <dbReference type="NCBI Taxonomy" id="349163"/>
    <lineage>
        <taxon>Bacteria</taxon>
        <taxon>Pseudomonadati</taxon>
        <taxon>Pseudomonadota</taxon>
        <taxon>Alphaproteobacteria</taxon>
        <taxon>Acetobacterales</taxon>
        <taxon>Acidocellaceae</taxon>
        <taxon>Acidiphilium</taxon>
    </lineage>
</organism>
<feature type="chain" id="PRO_1000054569" description="Large ribosomal subunit protein uL16">
    <location>
        <begin position="1"/>
        <end position="138"/>
    </location>
</feature>
<dbReference type="EMBL" id="CP000697">
    <property type="protein sequence ID" value="ABQ31140.1"/>
    <property type="molecule type" value="Genomic_DNA"/>
</dbReference>
<dbReference type="RefSeq" id="WP_007424180.1">
    <property type="nucleotide sequence ID" value="NC_009484.1"/>
</dbReference>
<dbReference type="SMR" id="A5FZV8"/>
<dbReference type="STRING" id="349163.Acry_1939"/>
<dbReference type="KEGG" id="acr:Acry_1939"/>
<dbReference type="eggNOG" id="COG0197">
    <property type="taxonomic scope" value="Bacteria"/>
</dbReference>
<dbReference type="HOGENOM" id="CLU_078858_2_1_5"/>
<dbReference type="Proteomes" id="UP000000245">
    <property type="component" value="Chromosome"/>
</dbReference>
<dbReference type="GO" id="GO:0022625">
    <property type="term" value="C:cytosolic large ribosomal subunit"/>
    <property type="evidence" value="ECO:0007669"/>
    <property type="project" value="TreeGrafter"/>
</dbReference>
<dbReference type="GO" id="GO:0019843">
    <property type="term" value="F:rRNA binding"/>
    <property type="evidence" value="ECO:0007669"/>
    <property type="project" value="UniProtKB-UniRule"/>
</dbReference>
<dbReference type="GO" id="GO:0003735">
    <property type="term" value="F:structural constituent of ribosome"/>
    <property type="evidence" value="ECO:0007669"/>
    <property type="project" value="InterPro"/>
</dbReference>
<dbReference type="GO" id="GO:0000049">
    <property type="term" value="F:tRNA binding"/>
    <property type="evidence" value="ECO:0007669"/>
    <property type="project" value="UniProtKB-KW"/>
</dbReference>
<dbReference type="GO" id="GO:0006412">
    <property type="term" value="P:translation"/>
    <property type="evidence" value="ECO:0007669"/>
    <property type="project" value="UniProtKB-UniRule"/>
</dbReference>
<dbReference type="CDD" id="cd01433">
    <property type="entry name" value="Ribosomal_L16_L10e"/>
    <property type="match status" value="1"/>
</dbReference>
<dbReference type="FunFam" id="3.90.1170.10:FF:000001">
    <property type="entry name" value="50S ribosomal protein L16"/>
    <property type="match status" value="1"/>
</dbReference>
<dbReference type="Gene3D" id="3.90.1170.10">
    <property type="entry name" value="Ribosomal protein L10e/L16"/>
    <property type="match status" value="1"/>
</dbReference>
<dbReference type="HAMAP" id="MF_01342">
    <property type="entry name" value="Ribosomal_uL16"/>
    <property type="match status" value="1"/>
</dbReference>
<dbReference type="InterPro" id="IPR047873">
    <property type="entry name" value="Ribosomal_uL16"/>
</dbReference>
<dbReference type="InterPro" id="IPR000114">
    <property type="entry name" value="Ribosomal_uL16_bact-type"/>
</dbReference>
<dbReference type="InterPro" id="IPR020798">
    <property type="entry name" value="Ribosomal_uL16_CS"/>
</dbReference>
<dbReference type="InterPro" id="IPR016180">
    <property type="entry name" value="Ribosomal_uL16_dom"/>
</dbReference>
<dbReference type="InterPro" id="IPR036920">
    <property type="entry name" value="Ribosomal_uL16_sf"/>
</dbReference>
<dbReference type="NCBIfam" id="TIGR01164">
    <property type="entry name" value="rplP_bact"/>
    <property type="match status" value="1"/>
</dbReference>
<dbReference type="PANTHER" id="PTHR12220">
    <property type="entry name" value="50S/60S RIBOSOMAL PROTEIN L16"/>
    <property type="match status" value="1"/>
</dbReference>
<dbReference type="PANTHER" id="PTHR12220:SF13">
    <property type="entry name" value="LARGE RIBOSOMAL SUBUNIT PROTEIN UL16M"/>
    <property type="match status" value="1"/>
</dbReference>
<dbReference type="Pfam" id="PF00252">
    <property type="entry name" value="Ribosomal_L16"/>
    <property type="match status" value="1"/>
</dbReference>
<dbReference type="PRINTS" id="PR00060">
    <property type="entry name" value="RIBOSOMALL16"/>
</dbReference>
<dbReference type="SUPFAM" id="SSF54686">
    <property type="entry name" value="Ribosomal protein L16p/L10e"/>
    <property type="match status" value="1"/>
</dbReference>
<dbReference type="PROSITE" id="PS00586">
    <property type="entry name" value="RIBOSOMAL_L16_1"/>
    <property type="match status" value="1"/>
</dbReference>
<dbReference type="PROSITE" id="PS00701">
    <property type="entry name" value="RIBOSOMAL_L16_2"/>
    <property type="match status" value="1"/>
</dbReference>
<name>RL16_ACICJ</name>
<gene>
    <name evidence="1" type="primary">rplP</name>
    <name type="ordered locus">Acry_1939</name>
</gene>
<reference key="1">
    <citation type="submission" date="2007-05" db="EMBL/GenBank/DDBJ databases">
        <title>Complete sequence of chromosome of Acidiphilium cryptum JF-5.</title>
        <authorList>
            <consortium name="US DOE Joint Genome Institute"/>
            <person name="Copeland A."/>
            <person name="Lucas S."/>
            <person name="Lapidus A."/>
            <person name="Barry K."/>
            <person name="Detter J.C."/>
            <person name="Glavina del Rio T."/>
            <person name="Hammon N."/>
            <person name="Israni S."/>
            <person name="Dalin E."/>
            <person name="Tice H."/>
            <person name="Pitluck S."/>
            <person name="Sims D."/>
            <person name="Brettin T."/>
            <person name="Bruce D."/>
            <person name="Han C."/>
            <person name="Schmutz J."/>
            <person name="Larimer F."/>
            <person name="Land M."/>
            <person name="Hauser L."/>
            <person name="Kyrpides N."/>
            <person name="Kim E."/>
            <person name="Magnuson T."/>
            <person name="Richardson P."/>
        </authorList>
    </citation>
    <scope>NUCLEOTIDE SEQUENCE [LARGE SCALE GENOMIC DNA]</scope>
    <source>
        <strain>JF-5</strain>
    </source>
</reference>
<proteinExistence type="inferred from homology"/>
<comment type="function">
    <text evidence="1">Binds 23S rRNA and is also seen to make contacts with the A and possibly P site tRNAs.</text>
</comment>
<comment type="subunit">
    <text evidence="1">Part of the 50S ribosomal subunit.</text>
</comment>
<comment type="similarity">
    <text evidence="1">Belongs to the universal ribosomal protein uL16 family.</text>
</comment>
<protein>
    <recommendedName>
        <fullName evidence="1">Large ribosomal subunit protein uL16</fullName>
    </recommendedName>
    <alternativeName>
        <fullName evidence="2">50S ribosomal protein L16</fullName>
    </alternativeName>
</protein>
<accession>A5FZV8</accession>